<accession>Q0W2J4</accession>
<sequence length="246" mass="26901">MFKAAINAEVFKDAIEAVSTLVDEAKFRITKDSISARAVDPANVAMVAFDLNAKAFDTFEATDGEIGIDLVRFMDILGMTARDDRLELNLNEETRKLEIRTGGLAYTLSLLDPGSIRKEPKVPALELPGKIVLNGAELKRAVKAAEKVSDHMALGVQDKTFYVEAEGDLDKVRLEIPESNLISLQATSNVRSLFSLDYLNDIVKSLGKAEQVTIDLGTDYPVKFTFSIASGNGTVIYLLAPRIESE</sequence>
<feature type="chain" id="PRO_1000019179" description="DNA polymerase sliding clamp">
    <location>
        <begin position="1"/>
        <end position="246"/>
    </location>
</feature>
<evidence type="ECO:0000255" key="1">
    <source>
        <dbReference type="HAMAP-Rule" id="MF_00317"/>
    </source>
</evidence>
<gene>
    <name evidence="1" type="primary">pcn</name>
    <name type="ordered locus">UNCMA_08530</name>
    <name type="ORF">RCIX2293</name>
</gene>
<keyword id="KW-0235">DNA replication</keyword>
<keyword id="KW-0238">DNA-binding</keyword>
<keyword id="KW-1185">Reference proteome</keyword>
<reference key="1">
    <citation type="journal article" date="2006" name="Science">
        <title>Genome of rice cluster I archaea -- the key methane producers in the rice rhizosphere.</title>
        <authorList>
            <person name="Erkel C."/>
            <person name="Kube M."/>
            <person name="Reinhardt R."/>
            <person name="Liesack W."/>
        </authorList>
    </citation>
    <scope>NUCLEOTIDE SEQUENCE [LARGE SCALE GENOMIC DNA]</scope>
    <source>
        <strain>DSM 22066 / NBRC 105507 / MRE50</strain>
    </source>
</reference>
<protein>
    <recommendedName>
        <fullName evidence="1">DNA polymerase sliding clamp</fullName>
    </recommendedName>
    <alternativeName>
        <fullName evidence="1">Proliferating cell nuclear antigen homolog</fullName>
        <shortName evidence="1">PCNA</shortName>
    </alternativeName>
</protein>
<proteinExistence type="inferred from homology"/>
<dbReference type="EMBL" id="AM114193">
    <property type="protein sequence ID" value="CAJ37399.1"/>
    <property type="molecule type" value="Genomic_DNA"/>
</dbReference>
<dbReference type="RefSeq" id="WP_012035182.1">
    <property type="nucleotide sequence ID" value="NC_009464.1"/>
</dbReference>
<dbReference type="SMR" id="Q0W2J4"/>
<dbReference type="STRING" id="351160.RCIX2293"/>
<dbReference type="GeneID" id="5143526"/>
<dbReference type="KEGG" id="rci:RCIX2293"/>
<dbReference type="PATRIC" id="fig|351160.9.peg.883"/>
<dbReference type="eggNOG" id="arCOG00488">
    <property type="taxonomic scope" value="Archaea"/>
</dbReference>
<dbReference type="OrthoDB" id="14749at2157"/>
<dbReference type="Proteomes" id="UP000000663">
    <property type="component" value="Chromosome"/>
</dbReference>
<dbReference type="GO" id="GO:0003677">
    <property type="term" value="F:DNA binding"/>
    <property type="evidence" value="ECO:0007669"/>
    <property type="project" value="UniProtKB-UniRule"/>
</dbReference>
<dbReference type="GO" id="GO:0030337">
    <property type="term" value="F:DNA polymerase processivity factor activity"/>
    <property type="evidence" value="ECO:0007669"/>
    <property type="project" value="UniProtKB-UniRule"/>
</dbReference>
<dbReference type="GO" id="GO:0006272">
    <property type="term" value="P:leading strand elongation"/>
    <property type="evidence" value="ECO:0007669"/>
    <property type="project" value="TreeGrafter"/>
</dbReference>
<dbReference type="GO" id="GO:0006275">
    <property type="term" value="P:regulation of DNA replication"/>
    <property type="evidence" value="ECO:0007669"/>
    <property type="project" value="UniProtKB-UniRule"/>
</dbReference>
<dbReference type="CDD" id="cd00577">
    <property type="entry name" value="PCNA"/>
    <property type="match status" value="1"/>
</dbReference>
<dbReference type="Gene3D" id="3.70.10.10">
    <property type="match status" value="1"/>
</dbReference>
<dbReference type="HAMAP" id="MF_00317">
    <property type="entry name" value="DNApol_clamp_arch"/>
    <property type="match status" value="1"/>
</dbReference>
<dbReference type="InterPro" id="IPR046938">
    <property type="entry name" value="DNA_clamp_sf"/>
</dbReference>
<dbReference type="InterPro" id="IPR000730">
    <property type="entry name" value="Pr_cel_nuc_antig"/>
</dbReference>
<dbReference type="InterPro" id="IPR022649">
    <property type="entry name" value="Pr_cel_nuc_antig_C"/>
</dbReference>
<dbReference type="InterPro" id="IPR022659">
    <property type="entry name" value="Pr_cel_nuc_antig_CS"/>
</dbReference>
<dbReference type="InterPro" id="IPR022648">
    <property type="entry name" value="Pr_cel_nuc_antig_N"/>
</dbReference>
<dbReference type="NCBIfam" id="NF002222">
    <property type="entry name" value="PRK01115.1-5"/>
    <property type="match status" value="1"/>
</dbReference>
<dbReference type="PANTHER" id="PTHR11352">
    <property type="entry name" value="PROLIFERATING CELL NUCLEAR ANTIGEN"/>
    <property type="match status" value="1"/>
</dbReference>
<dbReference type="PANTHER" id="PTHR11352:SF0">
    <property type="entry name" value="PROLIFERATING CELL NUCLEAR ANTIGEN"/>
    <property type="match status" value="1"/>
</dbReference>
<dbReference type="Pfam" id="PF02747">
    <property type="entry name" value="PCNA_C"/>
    <property type="match status" value="1"/>
</dbReference>
<dbReference type="Pfam" id="PF00705">
    <property type="entry name" value="PCNA_N"/>
    <property type="match status" value="1"/>
</dbReference>
<dbReference type="PRINTS" id="PR00339">
    <property type="entry name" value="PCNACYCLIN"/>
</dbReference>
<dbReference type="SUPFAM" id="SSF55979">
    <property type="entry name" value="DNA clamp"/>
    <property type="match status" value="2"/>
</dbReference>
<dbReference type="PROSITE" id="PS01251">
    <property type="entry name" value="PCNA_1"/>
    <property type="match status" value="1"/>
</dbReference>
<organism>
    <name type="scientific">Methanocella arvoryzae (strain DSM 22066 / NBRC 105507 / MRE50)</name>
    <dbReference type="NCBI Taxonomy" id="351160"/>
    <lineage>
        <taxon>Archaea</taxon>
        <taxon>Methanobacteriati</taxon>
        <taxon>Methanobacteriota</taxon>
        <taxon>Stenosarchaea group</taxon>
        <taxon>Methanomicrobia</taxon>
        <taxon>Methanocellales</taxon>
        <taxon>Methanocellaceae</taxon>
        <taxon>Methanocella</taxon>
    </lineage>
</organism>
<comment type="function">
    <text evidence="1">Sliding clamp subunit that acts as a moving platform for DNA processing. Responsible for tethering the catalytic subunit of DNA polymerase and other proteins to DNA during high-speed replication.</text>
</comment>
<comment type="subunit">
    <text evidence="1">Homotrimer. The subunits circularize to form a toroid; DNA passes through its center. Replication factor C (RFC) is required to load the toroid on the DNA.</text>
</comment>
<comment type="similarity">
    <text evidence="1">Belongs to the PCNA family.</text>
</comment>
<name>PCNA_METAR</name>